<accession>Q7XPY5</accession>
<reference key="1">
    <citation type="journal article" date="2002" name="Nature">
        <title>Sequence and analysis of rice chromosome 4.</title>
        <authorList>
            <person name="Feng Q."/>
            <person name="Zhang Y."/>
            <person name="Hao P."/>
            <person name="Wang S."/>
            <person name="Fu G."/>
            <person name="Huang Y."/>
            <person name="Li Y."/>
            <person name="Zhu J."/>
            <person name="Liu Y."/>
            <person name="Hu X."/>
            <person name="Jia P."/>
            <person name="Zhang Y."/>
            <person name="Zhao Q."/>
            <person name="Ying K."/>
            <person name="Yu S."/>
            <person name="Tang Y."/>
            <person name="Weng Q."/>
            <person name="Zhang L."/>
            <person name="Lu Y."/>
            <person name="Mu J."/>
            <person name="Lu Y."/>
            <person name="Zhang L.S."/>
            <person name="Yu Z."/>
            <person name="Fan D."/>
            <person name="Liu X."/>
            <person name="Lu T."/>
            <person name="Li C."/>
            <person name="Wu Y."/>
            <person name="Sun T."/>
            <person name="Lei H."/>
            <person name="Li T."/>
            <person name="Hu H."/>
            <person name="Guan J."/>
            <person name="Wu M."/>
            <person name="Zhang R."/>
            <person name="Zhou B."/>
            <person name="Chen Z."/>
            <person name="Chen L."/>
            <person name="Jin Z."/>
            <person name="Wang R."/>
            <person name="Yin H."/>
            <person name="Cai Z."/>
            <person name="Ren S."/>
            <person name="Lv G."/>
            <person name="Gu W."/>
            <person name="Zhu G."/>
            <person name="Tu Y."/>
            <person name="Jia J."/>
            <person name="Zhang Y."/>
            <person name="Chen J."/>
            <person name="Kang H."/>
            <person name="Chen X."/>
            <person name="Shao C."/>
            <person name="Sun Y."/>
            <person name="Hu Q."/>
            <person name="Zhang X."/>
            <person name="Zhang W."/>
            <person name="Wang L."/>
            <person name="Ding C."/>
            <person name="Sheng H."/>
            <person name="Gu J."/>
            <person name="Chen S."/>
            <person name="Ni L."/>
            <person name="Zhu F."/>
            <person name="Chen W."/>
            <person name="Lan L."/>
            <person name="Lai Y."/>
            <person name="Cheng Z."/>
            <person name="Gu M."/>
            <person name="Jiang J."/>
            <person name="Li J."/>
            <person name="Hong G."/>
            <person name="Xue Y."/>
            <person name="Han B."/>
        </authorList>
    </citation>
    <scope>NUCLEOTIDE SEQUENCE [LARGE SCALE GENOMIC DNA]</scope>
    <source>
        <strain>cv. Nipponbare</strain>
    </source>
</reference>
<reference key="2">
    <citation type="journal article" date="2005" name="Nature">
        <title>The map-based sequence of the rice genome.</title>
        <authorList>
            <consortium name="International rice genome sequencing project (IRGSP)"/>
        </authorList>
    </citation>
    <scope>NUCLEOTIDE SEQUENCE [LARGE SCALE GENOMIC DNA]</scope>
    <source>
        <strain>cv. Nipponbare</strain>
    </source>
</reference>
<reference key="3">
    <citation type="journal article" date="2013" name="Rice">
        <title>Improvement of the Oryza sativa Nipponbare reference genome using next generation sequence and optical map data.</title>
        <authorList>
            <person name="Kawahara Y."/>
            <person name="de la Bastide M."/>
            <person name="Hamilton J.P."/>
            <person name="Kanamori H."/>
            <person name="McCombie W.R."/>
            <person name="Ouyang S."/>
            <person name="Schwartz D.C."/>
            <person name="Tanaka T."/>
            <person name="Wu J."/>
            <person name="Zhou S."/>
            <person name="Childs K.L."/>
            <person name="Davidson R.M."/>
            <person name="Lin H."/>
            <person name="Quesada-Ocampo L."/>
            <person name="Vaillancourt B."/>
            <person name="Sakai H."/>
            <person name="Lee S.S."/>
            <person name="Kim J."/>
            <person name="Numa H."/>
            <person name="Itoh T."/>
            <person name="Buell C.R."/>
            <person name="Matsumoto T."/>
        </authorList>
    </citation>
    <scope>GENOME REANNOTATION</scope>
    <source>
        <strain>cv. Nipponbare</strain>
    </source>
</reference>
<reference key="4">
    <citation type="journal article" date="2006" name="BMC Plant Biol.">
        <title>Analysis of rice glycosyl hydrolase family 1 and expression of Os4bglu12 beta-glucosidase.</title>
        <authorList>
            <person name="Opassiri R."/>
            <person name="Pomthong B."/>
            <person name="Onkoksoong T."/>
            <person name="Akiyama T."/>
            <person name="Esen A."/>
            <person name="Ketudat Cairns J.R."/>
        </authorList>
    </citation>
    <scope>GENE FAMILY</scope>
    <scope>NOMENCLATURE</scope>
</reference>
<organism>
    <name type="scientific">Oryza sativa subsp. japonica</name>
    <name type="common">Rice</name>
    <dbReference type="NCBI Taxonomy" id="39947"/>
    <lineage>
        <taxon>Eukaryota</taxon>
        <taxon>Viridiplantae</taxon>
        <taxon>Streptophyta</taxon>
        <taxon>Embryophyta</taxon>
        <taxon>Tracheophyta</taxon>
        <taxon>Spermatophyta</taxon>
        <taxon>Magnoliopsida</taxon>
        <taxon>Liliopsida</taxon>
        <taxon>Poales</taxon>
        <taxon>Poaceae</taxon>
        <taxon>BOP clade</taxon>
        <taxon>Oryzoideae</taxon>
        <taxon>Oryzeae</taxon>
        <taxon>Oryzinae</taxon>
        <taxon>Oryza</taxon>
        <taxon>Oryza sativa</taxon>
    </lineage>
</organism>
<sequence length="360" mass="41143">MARRRMGEEGKGGGWGLNGRQCRFGNRLRAVKGEGWRSAVAAQAATGRREEDDAGGREKGEKRERKGGLSPCLFGKRRRERRRGGRGRREALPPSLGGLRAERRGRGDDDVLINYNVQHVSRIKLEERLLITDKLSLRFLDPIFFGEYPREMREILSSNLPKFTPEEKKLLQNKVDFIGINQYTAIYAKDCIYSPCALNTYEGNALVYTTGVRNGAKIGKPTAFSTYFVVPESIESAVMYVNGRYKDTTIYITENGYSQHSDTNMEDLINDVERVNYLQGYLKYLSSAVRKGANVGGYFMWSLIDNFEWVFGYTIKFGLYHVDFDTQERIPKMSAKWYRDFLTGSNVTDDTQVWSRRADS</sequence>
<protein>
    <recommendedName>
        <fullName>Putative beta-glucosidase 15</fullName>
        <shortName>Os4bglu15</shortName>
        <ecNumber evidence="2">3.2.1.21</ecNumber>
    </recommendedName>
</protein>
<comment type="catalytic activity">
    <reaction evidence="2">
        <text>Hydrolysis of terminal, non-reducing beta-D-glucosyl residues with release of beta-D-glucose.</text>
        <dbReference type="EC" id="3.2.1.21"/>
    </reaction>
</comment>
<comment type="similarity">
    <text evidence="7">Belongs to the glycosyl hydrolase 1 family.</text>
</comment>
<comment type="caution">
    <text evidence="7">Could be the product of a pseudogene.</text>
</comment>
<feature type="chain" id="PRO_0000390332" description="Putative beta-glucosidase 15">
    <location>
        <begin position="1"/>
        <end position="360"/>
    </location>
</feature>
<feature type="region of interest" description="Disordered" evidence="6">
    <location>
        <begin position="1"/>
        <end position="21"/>
    </location>
</feature>
<feature type="region of interest" description="Disordered" evidence="6">
    <location>
        <begin position="35"/>
        <end position="103"/>
    </location>
</feature>
<feature type="compositionally biased region" description="Basic and acidic residues" evidence="6">
    <location>
        <begin position="1"/>
        <end position="11"/>
    </location>
</feature>
<feature type="compositionally biased region" description="Basic and acidic residues" evidence="6">
    <location>
        <begin position="47"/>
        <end position="67"/>
    </location>
</feature>
<feature type="compositionally biased region" description="Basic residues" evidence="6">
    <location>
        <begin position="75"/>
        <end position="86"/>
    </location>
</feature>
<feature type="active site" description="Nucleophile" evidence="3">
    <location>
        <position position="254"/>
    </location>
</feature>
<feature type="binding site" evidence="3">
    <location>
        <position position="183"/>
    </location>
    <ligand>
        <name>a beta-D-glucoside</name>
        <dbReference type="ChEBI" id="CHEBI:22798"/>
    </ligand>
</feature>
<feature type="binding site" evidence="4">
    <location>
        <position position="254"/>
    </location>
    <ligand>
        <name>a beta-D-glucoside</name>
        <dbReference type="ChEBI" id="CHEBI:22798"/>
    </ligand>
</feature>
<feature type="binding site" evidence="3">
    <location>
        <position position="301"/>
    </location>
    <ligand>
        <name>a beta-D-glucoside</name>
        <dbReference type="ChEBI" id="CHEBI:22798"/>
    </ligand>
</feature>
<feature type="binding site" evidence="3">
    <location>
        <begin position="308"/>
        <end position="309"/>
    </location>
    <ligand>
        <name>a beta-D-glucoside</name>
        <dbReference type="ChEBI" id="CHEBI:22798"/>
    </ligand>
</feature>
<feature type="binding site" evidence="1">
    <location>
        <position position="317"/>
    </location>
    <ligand>
        <name>a beta-D-glucoside</name>
        <dbReference type="ChEBI" id="CHEBI:22798"/>
    </ligand>
</feature>
<feature type="glycosylation site" description="N-linked (GlcNAc...) asparagine" evidence="5">
    <location>
        <position position="346"/>
    </location>
</feature>
<feature type="disulfide bond" evidence="3">
    <location>
        <begin position="191"/>
        <end position="196"/>
    </location>
</feature>
<evidence type="ECO:0000250" key="1">
    <source>
        <dbReference type="UniProtKB" id="Q1XH05"/>
    </source>
</evidence>
<evidence type="ECO:0000250" key="2">
    <source>
        <dbReference type="UniProtKB" id="Q75I94"/>
    </source>
</evidence>
<evidence type="ECO:0000250" key="3">
    <source>
        <dbReference type="UniProtKB" id="Q7XSK0"/>
    </source>
</evidence>
<evidence type="ECO:0000250" key="4">
    <source>
        <dbReference type="UniProtKB" id="Q9SPP9"/>
    </source>
</evidence>
<evidence type="ECO:0000255" key="5">
    <source>
        <dbReference type="PROSITE-ProRule" id="PRU00498"/>
    </source>
</evidence>
<evidence type="ECO:0000256" key="6">
    <source>
        <dbReference type="SAM" id="MobiDB-lite"/>
    </source>
</evidence>
<evidence type="ECO:0000305" key="7"/>
<keyword id="KW-1015">Disulfide bond</keyword>
<keyword id="KW-0325">Glycoprotein</keyword>
<keyword id="KW-0326">Glycosidase</keyword>
<keyword id="KW-0378">Hydrolase</keyword>
<keyword id="KW-1185">Reference proteome</keyword>
<name>BGL15_ORYSJ</name>
<proteinExistence type="uncertain"/>
<gene>
    <name type="primary">BGLU15</name>
    <name type="ordered locus">Os04g0513300</name>
    <name type="ordered locus">LOC_Os04g43380</name>
    <name type="ORF">OSJNBa0004N05.23</name>
</gene>
<dbReference type="EC" id="3.2.1.21" evidence="2"/>
<dbReference type="EMBL" id="AL606622">
    <property type="protein sequence ID" value="CAE03399.2"/>
    <property type="molecule type" value="Genomic_DNA"/>
</dbReference>
<dbReference type="EMBL" id="AP014960">
    <property type="status" value="NOT_ANNOTATED_CDS"/>
    <property type="molecule type" value="Genomic_DNA"/>
</dbReference>
<dbReference type="SMR" id="Q7XPY5"/>
<dbReference type="FunCoup" id="Q7XPY5">
    <property type="interactions" value="7"/>
</dbReference>
<dbReference type="STRING" id="39947.Q7XPY5"/>
<dbReference type="CAZy" id="GH1">
    <property type="family name" value="Glycoside Hydrolase Family 1"/>
</dbReference>
<dbReference type="GlyCosmos" id="Q7XPY5">
    <property type="glycosylation" value="1 site, No reported glycans"/>
</dbReference>
<dbReference type="PaxDb" id="39947-Q7XPY5"/>
<dbReference type="InParanoid" id="Q7XPY5"/>
<dbReference type="Proteomes" id="UP000000763">
    <property type="component" value="Chromosome 4"/>
</dbReference>
<dbReference type="Proteomes" id="UP000059680">
    <property type="component" value="Chromosome 4"/>
</dbReference>
<dbReference type="GO" id="GO:0033907">
    <property type="term" value="F:beta-D-fucosidase activity"/>
    <property type="evidence" value="ECO:0007669"/>
    <property type="project" value="UniProtKB-ARBA"/>
</dbReference>
<dbReference type="GO" id="GO:0004565">
    <property type="term" value="F:beta-galactosidase activity"/>
    <property type="evidence" value="ECO:0007669"/>
    <property type="project" value="UniProtKB-ARBA"/>
</dbReference>
<dbReference type="GO" id="GO:0008422">
    <property type="term" value="F:beta-glucosidase activity"/>
    <property type="evidence" value="ECO:0000318"/>
    <property type="project" value="GO_Central"/>
</dbReference>
<dbReference type="GO" id="GO:0005975">
    <property type="term" value="P:carbohydrate metabolic process"/>
    <property type="evidence" value="ECO:0007669"/>
    <property type="project" value="InterPro"/>
</dbReference>
<dbReference type="FunFam" id="3.20.20.80:FF:000319">
    <property type="entry name" value="Putative beta-glucosidase 15"/>
    <property type="match status" value="1"/>
</dbReference>
<dbReference type="Gene3D" id="3.20.20.80">
    <property type="entry name" value="Glycosidases"/>
    <property type="match status" value="1"/>
</dbReference>
<dbReference type="InterPro" id="IPR001360">
    <property type="entry name" value="Glyco_hydro_1"/>
</dbReference>
<dbReference type="InterPro" id="IPR017853">
    <property type="entry name" value="Glycoside_hydrolase_SF"/>
</dbReference>
<dbReference type="PANTHER" id="PTHR10353:SF159">
    <property type="entry name" value="BETA-GLUCOSIDASE 16"/>
    <property type="match status" value="1"/>
</dbReference>
<dbReference type="PANTHER" id="PTHR10353">
    <property type="entry name" value="GLYCOSYL HYDROLASE"/>
    <property type="match status" value="1"/>
</dbReference>
<dbReference type="Pfam" id="PF00232">
    <property type="entry name" value="Glyco_hydro_1"/>
    <property type="match status" value="1"/>
</dbReference>
<dbReference type="PRINTS" id="PR00131">
    <property type="entry name" value="GLHYDRLASE1"/>
</dbReference>
<dbReference type="SUPFAM" id="SSF51445">
    <property type="entry name" value="(Trans)glycosidases"/>
    <property type="match status" value="1"/>
</dbReference>